<protein>
    <recommendedName>
        <fullName evidence="1">Large ribosomal subunit protein uL14</fullName>
    </recommendedName>
    <alternativeName>
        <fullName evidence="2">50S ribosomal protein L14</fullName>
    </alternativeName>
</protein>
<reference key="1">
    <citation type="journal article" date="2008" name="PLoS ONE">
        <title>Genetic basis of virulence attenuation revealed by comparative genomic analysis of Mycobacterium tuberculosis strain H37Ra versus H37Rv.</title>
        <authorList>
            <person name="Zheng H."/>
            <person name="Lu L."/>
            <person name="Wang B."/>
            <person name="Pu S."/>
            <person name="Zhang X."/>
            <person name="Zhu G."/>
            <person name="Shi W."/>
            <person name="Zhang L."/>
            <person name="Wang H."/>
            <person name="Wang S."/>
            <person name="Zhao G."/>
            <person name="Zhang Y."/>
        </authorList>
    </citation>
    <scope>NUCLEOTIDE SEQUENCE [LARGE SCALE GENOMIC DNA]</scope>
    <source>
        <strain>ATCC 25177 / H37Ra</strain>
    </source>
</reference>
<keyword id="KW-0002">3D-structure</keyword>
<keyword id="KW-1185">Reference proteome</keyword>
<keyword id="KW-0687">Ribonucleoprotein</keyword>
<keyword id="KW-0689">Ribosomal protein</keyword>
<keyword id="KW-0694">RNA-binding</keyword>
<keyword id="KW-0699">rRNA-binding</keyword>
<gene>
    <name evidence="1" type="primary">rplN</name>
    <name type="ordered locus">MRA_0722</name>
</gene>
<name>RL14_MYCTA</name>
<proteinExistence type="evidence at protein level"/>
<comment type="function">
    <text evidence="1">Binds to 23S rRNA. Forms part of two intersubunit bridges in the 70S ribosome.</text>
</comment>
<comment type="subunit">
    <text evidence="1">Part of the 50S ribosomal subunit. Forms a cluster with proteins L3 and L19. In the 70S ribosome, L14 and L19 interact and together make contacts with the 16S rRNA in bridges B5 and B8.</text>
</comment>
<comment type="similarity">
    <text evidence="1">Belongs to the universal ribosomal protein uL14 family.</text>
</comment>
<feature type="chain" id="PRO_1000055645" description="Large ribosomal subunit protein uL14">
    <location>
        <begin position="1"/>
        <end position="122"/>
    </location>
</feature>
<feature type="strand" evidence="3">
    <location>
        <begin position="18"/>
        <end position="20"/>
    </location>
</feature>
<feature type="strand" evidence="3">
    <location>
        <begin position="38"/>
        <end position="45"/>
    </location>
</feature>
<feature type="strand" evidence="3">
    <location>
        <begin position="58"/>
        <end position="64"/>
    </location>
</feature>
<feature type="strand" evidence="3">
    <location>
        <begin position="76"/>
        <end position="81"/>
    </location>
</feature>
<feature type="strand" evidence="3">
    <location>
        <begin position="83"/>
        <end position="85"/>
    </location>
</feature>
<feature type="strand" evidence="3">
    <location>
        <begin position="94"/>
        <end position="96"/>
    </location>
</feature>
<feature type="turn" evidence="3">
    <location>
        <begin position="105"/>
        <end position="110"/>
    </location>
</feature>
<feature type="turn" evidence="3">
    <location>
        <begin position="112"/>
        <end position="116"/>
    </location>
</feature>
<feature type="strand" evidence="3">
    <location>
        <begin position="119"/>
        <end position="121"/>
    </location>
</feature>
<organism>
    <name type="scientific">Mycobacterium tuberculosis (strain ATCC 25177 / H37Ra)</name>
    <dbReference type="NCBI Taxonomy" id="419947"/>
    <lineage>
        <taxon>Bacteria</taxon>
        <taxon>Bacillati</taxon>
        <taxon>Actinomycetota</taxon>
        <taxon>Actinomycetes</taxon>
        <taxon>Mycobacteriales</taxon>
        <taxon>Mycobacteriaceae</taxon>
        <taxon>Mycobacterium</taxon>
        <taxon>Mycobacterium tuberculosis complex</taxon>
    </lineage>
</organism>
<accession>A5U0A0</accession>
<evidence type="ECO:0000255" key="1">
    <source>
        <dbReference type="HAMAP-Rule" id="MF_01367"/>
    </source>
</evidence>
<evidence type="ECO:0000305" key="2"/>
<evidence type="ECO:0007829" key="3">
    <source>
        <dbReference type="PDB" id="7F0D"/>
    </source>
</evidence>
<dbReference type="EMBL" id="CP000611">
    <property type="protein sequence ID" value="ABQ72450.1"/>
    <property type="molecule type" value="Genomic_DNA"/>
</dbReference>
<dbReference type="RefSeq" id="WP_003403649.1">
    <property type="nucleotide sequence ID" value="NZ_CP016972.1"/>
</dbReference>
<dbReference type="PDB" id="7F0D">
    <property type="method" value="EM"/>
    <property type="resolution" value="3.30 A"/>
    <property type="chains" value="K=2-122"/>
</dbReference>
<dbReference type="PDBsum" id="7F0D"/>
<dbReference type="SMR" id="A5U0A0"/>
<dbReference type="GeneID" id="93493169"/>
<dbReference type="KEGG" id="mra:MRA_0722"/>
<dbReference type="eggNOG" id="COG0093">
    <property type="taxonomic scope" value="Bacteria"/>
</dbReference>
<dbReference type="HOGENOM" id="CLU_095071_2_1_11"/>
<dbReference type="Proteomes" id="UP000001988">
    <property type="component" value="Chromosome"/>
</dbReference>
<dbReference type="GO" id="GO:0022625">
    <property type="term" value="C:cytosolic large ribosomal subunit"/>
    <property type="evidence" value="ECO:0007669"/>
    <property type="project" value="TreeGrafter"/>
</dbReference>
<dbReference type="GO" id="GO:0070180">
    <property type="term" value="F:large ribosomal subunit rRNA binding"/>
    <property type="evidence" value="ECO:0007669"/>
    <property type="project" value="TreeGrafter"/>
</dbReference>
<dbReference type="GO" id="GO:0003735">
    <property type="term" value="F:structural constituent of ribosome"/>
    <property type="evidence" value="ECO:0007669"/>
    <property type="project" value="InterPro"/>
</dbReference>
<dbReference type="GO" id="GO:0006412">
    <property type="term" value="P:translation"/>
    <property type="evidence" value="ECO:0007669"/>
    <property type="project" value="UniProtKB-UniRule"/>
</dbReference>
<dbReference type="CDD" id="cd00337">
    <property type="entry name" value="Ribosomal_uL14"/>
    <property type="match status" value="1"/>
</dbReference>
<dbReference type="FunFam" id="2.40.150.20:FF:000001">
    <property type="entry name" value="50S ribosomal protein L14"/>
    <property type="match status" value="1"/>
</dbReference>
<dbReference type="Gene3D" id="2.40.150.20">
    <property type="entry name" value="Ribosomal protein L14"/>
    <property type="match status" value="1"/>
</dbReference>
<dbReference type="HAMAP" id="MF_01367">
    <property type="entry name" value="Ribosomal_uL14"/>
    <property type="match status" value="1"/>
</dbReference>
<dbReference type="InterPro" id="IPR000218">
    <property type="entry name" value="Ribosomal_uL14"/>
</dbReference>
<dbReference type="InterPro" id="IPR005745">
    <property type="entry name" value="Ribosomal_uL14_bac-type"/>
</dbReference>
<dbReference type="InterPro" id="IPR019972">
    <property type="entry name" value="Ribosomal_uL14_CS"/>
</dbReference>
<dbReference type="InterPro" id="IPR036853">
    <property type="entry name" value="Ribosomal_uL14_sf"/>
</dbReference>
<dbReference type="NCBIfam" id="TIGR01067">
    <property type="entry name" value="rplN_bact"/>
    <property type="match status" value="1"/>
</dbReference>
<dbReference type="PANTHER" id="PTHR11761">
    <property type="entry name" value="50S/60S RIBOSOMAL PROTEIN L14/L23"/>
    <property type="match status" value="1"/>
</dbReference>
<dbReference type="PANTHER" id="PTHR11761:SF3">
    <property type="entry name" value="LARGE RIBOSOMAL SUBUNIT PROTEIN UL14M"/>
    <property type="match status" value="1"/>
</dbReference>
<dbReference type="Pfam" id="PF00238">
    <property type="entry name" value="Ribosomal_L14"/>
    <property type="match status" value="1"/>
</dbReference>
<dbReference type="SMART" id="SM01374">
    <property type="entry name" value="Ribosomal_L14"/>
    <property type="match status" value="1"/>
</dbReference>
<dbReference type="SUPFAM" id="SSF50193">
    <property type="entry name" value="Ribosomal protein L14"/>
    <property type="match status" value="1"/>
</dbReference>
<dbReference type="PROSITE" id="PS00049">
    <property type="entry name" value="RIBOSOMAL_L14"/>
    <property type="match status" value="1"/>
</dbReference>
<sequence>MIQQESRLKVADNTGAKEILCIRVLGGSSRRYAGIGDVIVATVKDAIPGGNVKRGDVVKAVVVRTVKERRRPDGSYIKFDENAAVIIKPDNDPRGTRIFGPVGRELREKRFMKIISLAPEVL</sequence>